<feature type="chain" id="PRO_1000215182" description="Peptide methionine sulfoxide reductase MsrB">
    <location>
        <begin position="1"/>
        <end position="132"/>
    </location>
</feature>
<feature type="domain" description="MsrB" evidence="2">
    <location>
        <begin position="9"/>
        <end position="131"/>
    </location>
</feature>
<feature type="active site" description="Nucleophile" evidence="2">
    <location>
        <position position="120"/>
    </location>
</feature>
<feature type="binding site" evidence="2">
    <location>
        <position position="48"/>
    </location>
    <ligand>
        <name>Zn(2+)</name>
        <dbReference type="ChEBI" id="CHEBI:29105"/>
    </ligand>
</feature>
<feature type="binding site" evidence="2">
    <location>
        <position position="51"/>
    </location>
    <ligand>
        <name>Zn(2+)</name>
        <dbReference type="ChEBI" id="CHEBI:29105"/>
    </ligand>
</feature>
<feature type="binding site" evidence="2">
    <location>
        <position position="97"/>
    </location>
    <ligand>
        <name>Zn(2+)</name>
        <dbReference type="ChEBI" id="CHEBI:29105"/>
    </ligand>
</feature>
<feature type="binding site" evidence="2">
    <location>
        <position position="100"/>
    </location>
    <ligand>
        <name>Zn(2+)</name>
        <dbReference type="ChEBI" id="CHEBI:29105"/>
    </ligand>
</feature>
<keyword id="KW-0479">Metal-binding</keyword>
<keyword id="KW-0560">Oxidoreductase</keyword>
<keyword id="KW-1185">Reference proteome</keyword>
<keyword id="KW-0862">Zinc</keyword>
<sequence>MSTDEPKTDAQWRAELSPEQYRILREQGTERAFTGEYWDHHANGEYRCAACGAPLFSSSAKFDSGTGWPSFYEALNAQAVRERTDTTHGMVRTEALCSRCNSHLGHVFPDGPPPTGLRYCINSASLSFHPKD</sequence>
<proteinExistence type="inferred from homology"/>
<comment type="catalytic activity">
    <reaction evidence="1">
        <text>L-methionyl-[protein] + [thioredoxin]-disulfide + H2O = L-methionyl-(R)-S-oxide-[protein] + [thioredoxin]-dithiol</text>
        <dbReference type="Rhea" id="RHEA:24164"/>
        <dbReference type="Rhea" id="RHEA-COMP:10698"/>
        <dbReference type="Rhea" id="RHEA-COMP:10700"/>
        <dbReference type="Rhea" id="RHEA-COMP:12313"/>
        <dbReference type="Rhea" id="RHEA-COMP:12314"/>
        <dbReference type="ChEBI" id="CHEBI:15377"/>
        <dbReference type="ChEBI" id="CHEBI:16044"/>
        <dbReference type="ChEBI" id="CHEBI:29950"/>
        <dbReference type="ChEBI" id="CHEBI:45764"/>
        <dbReference type="ChEBI" id="CHEBI:50058"/>
        <dbReference type="EC" id="1.8.4.12"/>
    </reaction>
</comment>
<comment type="cofactor">
    <cofactor evidence="1">
        <name>Zn(2+)</name>
        <dbReference type="ChEBI" id="CHEBI:29105"/>
    </cofactor>
    <text evidence="1">Binds 1 zinc ion per subunit. The zinc ion is important for the structural integrity of the protein.</text>
</comment>
<comment type="similarity">
    <text evidence="1">Belongs to the MsrB Met sulfoxide reductase family.</text>
</comment>
<name>MSRB_THIDA</name>
<reference key="1">
    <citation type="journal article" date="2006" name="J. Bacteriol.">
        <title>The genome sequence of the obligately chemolithoautotrophic, facultatively anaerobic bacterium Thiobacillus denitrificans.</title>
        <authorList>
            <person name="Beller H.R."/>
            <person name="Chain P.S."/>
            <person name="Letain T.E."/>
            <person name="Chakicherla A."/>
            <person name="Larimer F.W."/>
            <person name="Richardson P.M."/>
            <person name="Coleman M.A."/>
            <person name="Wood A.P."/>
            <person name="Kelly D.P."/>
        </authorList>
    </citation>
    <scope>NUCLEOTIDE SEQUENCE [LARGE SCALE GENOMIC DNA]</scope>
    <source>
        <strain>ATCC 25259 / T1</strain>
    </source>
</reference>
<dbReference type="EC" id="1.8.4.12" evidence="1"/>
<dbReference type="EMBL" id="CP000116">
    <property type="protein sequence ID" value="AAZ97058.1"/>
    <property type="molecule type" value="Genomic_DNA"/>
</dbReference>
<dbReference type="RefSeq" id="WP_011311617.1">
    <property type="nucleotide sequence ID" value="NC_007404.1"/>
</dbReference>
<dbReference type="SMR" id="Q3SJU1"/>
<dbReference type="STRING" id="292415.Tbd_1105"/>
<dbReference type="KEGG" id="tbd:Tbd_1105"/>
<dbReference type="eggNOG" id="COG0229">
    <property type="taxonomic scope" value="Bacteria"/>
</dbReference>
<dbReference type="HOGENOM" id="CLU_031040_8_5_4"/>
<dbReference type="OrthoDB" id="4174719at2"/>
<dbReference type="Proteomes" id="UP000008291">
    <property type="component" value="Chromosome"/>
</dbReference>
<dbReference type="GO" id="GO:0005737">
    <property type="term" value="C:cytoplasm"/>
    <property type="evidence" value="ECO:0007669"/>
    <property type="project" value="TreeGrafter"/>
</dbReference>
<dbReference type="GO" id="GO:0033743">
    <property type="term" value="F:peptide-methionine (R)-S-oxide reductase activity"/>
    <property type="evidence" value="ECO:0007669"/>
    <property type="project" value="UniProtKB-UniRule"/>
</dbReference>
<dbReference type="GO" id="GO:0008270">
    <property type="term" value="F:zinc ion binding"/>
    <property type="evidence" value="ECO:0007669"/>
    <property type="project" value="UniProtKB-UniRule"/>
</dbReference>
<dbReference type="GO" id="GO:0030091">
    <property type="term" value="P:protein repair"/>
    <property type="evidence" value="ECO:0007669"/>
    <property type="project" value="InterPro"/>
</dbReference>
<dbReference type="GO" id="GO:0006979">
    <property type="term" value="P:response to oxidative stress"/>
    <property type="evidence" value="ECO:0007669"/>
    <property type="project" value="InterPro"/>
</dbReference>
<dbReference type="FunFam" id="2.170.150.20:FF:000001">
    <property type="entry name" value="Peptide methionine sulfoxide reductase MsrB"/>
    <property type="match status" value="1"/>
</dbReference>
<dbReference type="Gene3D" id="2.170.150.20">
    <property type="entry name" value="Peptide methionine sulfoxide reductase"/>
    <property type="match status" value="1"/>
</dbReference>
<dbReference type="HAMAP" id="MF_01400">
    <property type="entry name" value="MsrB"/>
    <property type="match status" value="1"/>
</dbReference>
<dbReference type="InterPro" id="IPR028427">
    <property type="entry name" value="Met_Sox_Rdtase_MsrB"/>
</dbReference>
<dbReference type="InterPro" id="IPR002579">
    <property type="entry name" value="Met_Sox_Rdtase_MsrB_dom"/>
</dbReference>
<dbReference type="InterPro" id="IPR011057">
    <property type="entry name" value="Mss4-like_sf"/>
</dbReference>
<dbReference type="NCBIfam" id="TIGR00357">
    <property type="entry name" value="peptide-methionine (R)-S-oxide reductase MsrB"/>
    <property type="match status" value="1"/>
</dbReference>
<dbReference type="PANTHER" id="PTHR10173">
    <property type="entry name" value="METHIONINE SULFOXIDE REDUCTASE"/>
    <property type="match status" value="1"/>
</dbReference>
<dbReference type="PANTHER" id="PTHR10173:SF52">
    <property type="entry name" value="METHIONINE-R-SULFOXIDE REDUCTASE B1"/>
    <property type="match status" value="1"/>
</dbReference>
<dbReference type="Pfam" id="PF01641">
    <property type="entry name" value="SelR"/>
    <property type="match status" value="1"/>
</dbReference>
<dbReference type="SUPFAM" id="SSF51316">
    <property type="entry name" value="Mss4-like"/>
    <property type="match status" value="1"/>
</dbReference>
<dbReference type="PROSITE" id="PS51790">
    <property type="entry name" value="MSRB"/>
    <property type="match status" value="1"/>
</dbReference>
<evidence type="ECO:0000255" key="1">
    <source>
        <dbReference type="HAMAP-Rule" id="MF_01400"/>
    </source>
</evidence>
<evidence type="ECO:0000255" key="2">
    <source>
        <dbReference type="PROSITE-ProRule" id="PRU01126"/>
    </source>
</evidence>
<gene>
    <name evidence="1" type="primary">msrB</name>
    <name type="ordered locus">Tbd_1105</name>
</gene>
<organism>
    <name type="scientific">Thiobacillus denitrificans (strain ATCC 25259 / T1)</name>
    <dbReference type="NCBI Taxonomy" id="292415"/>
    <lineage>
        <taxon>Bacteria</taxon>
        <taxon>Pseudomonadati</taxon>
        <taxon>Pseudomonadota</taxon>
        <taxon>Betaproteobacteria</taxon>
        <taxon>Nitrosomonadales</taxon>
        <taxon>Thiobacillaceae</taxon>
        <taxon>Thiobacillus</taxon>
    </lineage>
</organism>
<protein>
    <recommendedName>
        <fullName evidence="1">Peptide methionine sulfoxide reductase MsrB</fullName>
        <ecNumber evidence="1">1.8.4.12</ecNumber>
    </recommendedName>
    <alternativeName>
        <fullName evidence="1">Peptide-methionine (R)-S-oxide reductase</fullName>
    </alternativeName>
</protein>
<accession>Q3SJU1</accession>